<reference key="1">
    <citation type="journal article" date="2004" name="Nat. Biotechnol.">
        <title>Complete sequence and comparative genome analysis of the dairy bacterium Streptococcus thermophilus.</title>
        <authorList>
            <person name="Bolotin A."/>
            <person name="Quinquis B."/>
            <person name="Renault P."/>
            <person name="Sorokin A."/>
            <person name="Ehrlich S.D."/>
            <person name="Kulakauskas S."/>
            <person name="Lapidus A."/>
            <person name="Goltsman E."/>
            <person name="Mazur M."/>
            <person name="Pusch G.D."/>
            <person name="Fonstein M."/>
            <person name="Overbeek R."/>
            <person name="Kyprides N."/>
            <person name="Purnelle B."/>
            <person name="Prozzi D."/>
            <person name="Ngui K."/>
            <person name="Masuy D."/>
            <person name="Hancy F."/>
            <person name="Burteau S."/>
            <person name="Boutry M."/>
            <person name="Delcour J."/>
            <person name="Goffeau A."/>
            <person name="Hols P."/>
        </authorList>
    </citation>
    <scope>NUCLEOTIDE SEQUENCE [LARGE SCALE GENOMIC DNA]</scope>
    <source>
        <strain>ATCC BAA-250 / LMG 18311</strain>
    </source>
</reference>
<feature type="chain" id="PRO_0000098486" description="Isoleucine--tRNA ligase">
    <location>
        <begin position="1"/>
        <end position="929"/>
    </location>
</feature>
<feature type="short sequence motif" description="'HIGH' region">
    <location>
        <begin position="57"/>
        <end position="67"/>
    </location>
</feature>
<feature type="short sequence motif" description="'KMSKS' region">
    <location>
        <begin position="595"/>
        <end position="599"/>
    </location>
</feature>
<feature type="binding site" evidence="1">
    <location>
        <position position="554"/>
    </location>
    <ligand>
        <name>L-isoleucyl-5'-AMP</name>
        <dbReference type="ChEBI" id="CHEBI:178002"/>
    </ligand>
</feature>
<feature type="binding site" evidence="1">
    <location>
        <position position="598"/>
    </location>
    <ligand>
        <name>ATP</name>
        <dbReference type="ChEBI" id="CHEBI:30616"/>
    </ligand>
</feature>
<feature type="binding site" evidence="1">
    <location>
        <position position="888"/>
    </location>
    <ligand>
        <name>Zn(2+)</name>
        <dbReference type="ChEBI" id="CHEBI:29105"/>
    </ligand>
</feature>
<feature type="binding site" evidence="1">
    <location>
        <position position="891"/>
    </location>
    <ligand>
        <name>Zn(2+)</name>
        <dbReference type="ChEBI" id="CHEBI:29105"/>
    </ligand>
</feature>
<feature type="binding site" evidence="1">
    <location>
        <position position="908"/>
    </location>
    <ligand>
        <name>Zn(2+)</name>
        <dbReference type="ChEBI" id="CHEBI:29105"/>
    </ligand>
</feature>
<feature type="binding site" evidence="1">
    <location>
        <position position="911"/>
    </location>
    <ligand>
        <name>Zn(2+)</name>
        <dbReference type="ChEBI" id="CHEBI:29105"/>
    </ligand>
</feature>
<keyword id="KW-0030">Aminoacyl-tRNA synthetase</keyword>
<keyword id="KW-0067">ATP-binding</keyword>
<keyword id="KW-0963">Cytoplasm</keyword>
<keyword id="KW-0436">Ligase</keyword>
<keyword id="KW-0479">Metal-binding</keyword>
<keyword id="KW-0547">Nucleotide-binding</keyword>
<keyword id="KW-0648">Protein biosynthesis</keyword>
<keyword id="KW-1185">Reference proteome</keyword>
<keyword id="KW-0862">Zinc</keyword>
<proteinExistence type="inferred from homology"/>
<evidence type="ECO:0000255" key="1">
    <source>
        <dbReference type="HAMAP-Rule" id="MF_02002"/>
    </source>
</evidence>
<protein>
    <recommendedName>
        <fullName evidence="1">Isoleucine--tRNA ligase</fullName>
        <ecNumber evidence="1">6.1.1.5</ecNumber>
    </recommendedName>
    <alternativeName>
        <fullName evidence="1">Isoleucyl-tRNA synthetase</fullName>
        <shortName evidence="1">IleRS</shortName>
    </alternativeName>
</protein>
<dbReference type="EC" id="6.1.1.5" evidence="1"/>
<dbReference type="EMBL" id="CP000023">
    <property type="protein sequence ID" value="AAV60434.1"/>
    <property type="molecule type" value="Genomic_DNA"/>
</dbReference>
<dbReference type="RefSeq" id="WP_002946450.1">
    <property type="nucleotide sequence ID" value="NC_006448.1"/>
</dbReference>
<dbReference type="SMR" id="Q5M4X2"/>
<dbReference type="STRING" id="264199.stu0741"/>
<dbReference type="GeneID" id="66898641"/>
<dbReference type="KEGG" id="stl:stu0741"/>
<dbReference type="eggNOG" id="COG0060">
    <property type="taxonomic scope" value="Bacteria"/>
</dbReference>
<dbReference type="HOGENOM" id="CLU_001493_7_1_9"/>
<dbReference type="Proteomes" id="UP000001170">
    <property type="component" value="Chromosome"/>
</dbReference>
<dbReference type="GO" id="GO:0005829">
    <property type="term" value="C:cytosol"/>
    <property type="evidence" value="ECO:0007669"/>
    <property type="project" value="TreeGrafter"/>
</dbReference>
<dbReference type="GO" id="GO:0002161">
    <property type="term" value="F:aminoacyl-tRNA deacylase activity"/>
    <property type="evidence" value="ECO:0007669"/>
    <property type="project" value="InterPro"/>
</dbReference>
<dbReference type="GO" id="GO:0005524">
    <property type="term" value="F:ATP binding"/>
    <property type="evidence" value="ECO:0007669"/>
    <property type="project" value="UniProtKB-UniRule"/>
</dbReference>
<dbReference type="GO" id="GO:0004822">
    <property type="term" value="F:isoleucine-tRNA ligase activity"/>
    <property type="evidence" value="ECO:0007669"/>
    <property type="project" value="UniProtKB-UniRule"/>
</dbReference>
<dbReference type="GO" id="GO:0000049">
    <property type="term" value="F:tRNA binding"/>
    <property type="evidence" value="ECO:0007669"/>
    <property type="project" value="InterPro"/>
</dbReference>
<dbReference type="GO" id="GO:0008270">
    <property type="term" value="F:zinc ion binding"/>
    <property type="evidence" value="ECO:0007669"/>
    <property type="project" value="UniProtKB-UniRule"/>
</dbReference>
<dbReference type="GO" id="GO:0006428">
    <property type="term" value="P:isoleucyl-tRNA aminoacylation"/>
    <property type="evidence" value="ECO:0007669"/>
    <property type="project" value="UniProtKB-UniRule"/>
</dbReference>
<dbReference type="CDD" id="cd07960">
    <property type="entry name" value="Anticodon_Ia_Ile_BEm"/>
    <property type="match status" value="1"/>
</dbReference>
<dbReference type="FunFam" id="1.10.10.830:FF:000001">
    <property type="entry name" value="Isoleucine--tRNA ligase"/>
    <property type="match status" value="1"/>
</dbReference>
<dbReference type="FunFam" id="1.10.730.20:FF:000001">
    <property type="entry name" value="Isoleucine--tRNA ligase"/>
    <property type="match status" value="1"/>
</dbReference>
<dbReference type="FunFam" id="3.40.50.620:FF:000092">
    <property type="entry name" value="Isoleucine--tRNA ligase"/>
    <property type="match status" value="1"/>
</dbReference>
<dbReference type="FunFam" id="3.90.740.10:FF:000006">
    <property type="entry name" value="Isoleucine--tRNA ligase"/>
    <property type="match status" value="1"/>
</dbReference>
<dbReference type="Gene3D" id="1.10.730.20">
    <property type="match status" value="1"/>
</dbReference>
<dbReference type="Gene3D" id="3.40.50.620">
    <property type="entry name" value="HUPs"/>
    <property type="match status" value="2"/>
</dbReference>
<dbReference type="Gene3D" id="1.10.10.830">
    <property type="entry name" value="Ile-tRNA synthetase CP2 domain-like"/>
    <property type="match status" value="1"/>
</dbReference>
<dbReference type="HAMAP" id="MF_02002">
    <property type="entry name" value="Ile_tRNA_synth_type1"/>
    <property type="match status" value="1"/>
</dbReference>
<dbReference type="InterPro" id="IPR001412">
    <property type="entry name" value="aa-tRNA-synth_I_CS"/>
</dbReference>
<dbReference type="InterPro" id="IPR002300">
    <property type="entry name" value="aa-tRNA-synth_Ia"/>
</dbReference>
<dbReference type="InterPro" id="IPR033708">
    <property type="entry name" value="Anticodon_Ile_BEm"/>
</dbReference>
<dbReference type="InterPro" id="IPR002301">
    <property type="entry name" value="Ile-tRNA-ligase"/>
</dbReference>
<dbReference type="InterPro" id="IPR023585">
    <property type="entry name" value="Ile-tRNA-ligase_type1"/>
</dbReference>
<dbReference type="InterPro" id="IPR050081">
    <property type="entry name" value="Ile-tRNA_ligase"/>
</dbReference>
<dbReference type="InterPro" id="IPR013155">
    <property type="entry name" value="M/V/L/I-tRNA-synth_anticd-bd"/>
</dbReference>
<dbReference type="InterPro" id="IPR014729">
    <property type="entry name" value="Rossmann-like_a/b/a_fold"/>
</dbReference>
<dbReference type="InterPro" id="IPR009080">
    <property type="entry name" value="tRNAsynth_Ia_anticodon-bd"/>
</dbReference>
<dbReference type="InterPro" id="IPR009008">
    <property type="entry name" value="Val/Leu/Ile-tRNA-synth_edit"/>
</dbReference>
<dbReference type="InterPro" id="IPR010663">
    <property type="entry name" value="Znf_FPG/IleRS"/>
</dbReference>
<dbReference type="NCBIfam" id="TIGR00392">
    <property type="entry name" value="ileS"/>
    <property type="match status" value="1"/>
</dbReference>
<dbReference type="PANTHER" id="PTHR42765:SF1">
    <property type="entry name" value="ISOLEUCINE--TRNA LIGASE, MITOCHONDRIAL"/>
    <property type="match status" value="1"/>
</dbReference>
<dbReference type="PANTHER" id="PTHR42765">
    <property type="entry name" value="SOLEUCYL-TRNA SYNTHETASE"/>
    <property type="match status" value="1"/>
</dbReference>
<dbReference type="Pfam" id="PF08264">
    <property type="entry name" value="Anticodon_1"/>
    <property type="match status" value="1"/>
</dbReference>
<dbReference type="Pfam" id="PF00133">
    <property type="entry name" value="tRNA-synt_1"/>
    <property type="match status" value="1"/>
</dbReference>
<dbReference type="Pfam" id="PF06827">
    <property type="entry name" value="zf-FPG_IleRS"/>
    <property type="match status" value="1"/>
</dbReference>
<dbReference type="PRINTS" id="PR00984">
    <property type="entry name" value="TRNASYNTHILE"/>
</dbReference>
<dbReference type="SUPFAM" id="SSF47323">
    <property type="entry name" value="Anticodon-binding domain of a subclass of class I aminoacyl-tRNA synthetases"/>
    <property type="match status" value="1"/>
</dbReference>
<dbReference type="SUPFAM" id="SSF52374">
    <property type="entry name" value="Nucleotidylyl transferase"/>
    <property type="match status" value="1"/>
</dbReference>
<dbReference type="SUPFAM" id="SSF50677">
    <property type="entry name" value="ValRS/IleRS/LeuRS editing domain"/>
    <property type="match status" value="1"/>
</dbReference>
<dbReference type="PROSITE" id="PS00178">
    <property type="entry name" value="AA_TRNA_LIGASE_I"/>
    <property type="match status" value="1"/>
</dbReference>
<gene>
    <name evidence="1" type="primary">ileS</name>
    <name type="ordered locus">stu0741</name>
</gene>
<sequence length="929" mass="105854">MKLKETLNLGKTSFPMRAGLPNKEPIWQKEWEEAKVYQRRQELNQGKPHFTLHDGPPYANGNIHVGHAMNKISKDIIVRSKSMSGFYAPFIPGWDTHGLPIEQVLAKQGVKRKELDRAEYLKMCRDYALSQVDKQREDFKRLGVSADWENPYVTLTPDYEAAQIRVFGEMAKKGYIYQGAKPVYWSWSSESALAEAEIEYHDLVSTSLYYANKVKDGKGVLDTDTYIVVWTTTPFTVTASRGLTVGADIEYVLVKPAGETRKFIVASELLNSLSEKFAWEEVEVLNTYRGDELNQIVTEHPWDSEVDELVILGEHVTTDSGTGIVHTAPGFGEDDYNVGVANGLEVVVTVNERGIMMENAGPDFAGKFYDKVAPIVMEKLGDLLLAKEEISHSYPFDWRTKKPIIWRAVPQWFASVSKFRQEILDEIEKVKFHSEWGKVRLYNMIRDRGDWVISRQRAWGVPLPIFYAEDRTPIMTEETIEHVAKLFEEHGSVIWWERDAKDLLPEGFTHPGSPNGEFTKENDIMDVWFDSGSSWNGVVVNRPELTYPADLYLEGSDQYRGWFNSSLITSVANHGVAPYKQLLSQGFALDGKGEKMSKSLGNTIAPSDVEKQFGAEILRLWVTSVDTSNDVRISMDILSQVSESYRKIRNTLRFLIANTSDFNPTTDAVAFEDLRSVDQYMTIRFNQLVKNIRDAYENFEFLTIYKSLVNFINVELSAFYLDFAKDVVYIESAKSLERRQMQTVFYDILVKITKLLTPILPHTAEEIWSYLEFENEDYVQLSELPEAEDFANQDALLEKWNAFMDFRGKAQKALEEARNEKVIGKSLEAHLTIYPDAEVKELLESLNTNLAQLLIVSALTIAEGDVPESAVRFQGVSFTVERAEGEVCDRCRRIDPTTKERSYNATICNHCASIIEENFAEVVAEGFEV</sequence>
<accession>Q5M4X2</accession>
<comment type="function">
    <text evidence="1">Catalyzes the attachment of isoleucine to tRNA(Ile). As IleRS can inadvertently accommodate and process structurally similar amino acids such as valine, to avoid such errors it has two additional distinct tRNA(Ile)-dependent editing activities. One activity is designated as 'pretransfer' editing and involves the hydrolysis of activated Val-AMP. The other activity is designated 'posttransfer' editing and involves deacylation of mischarged Val-tRNA(Ile).</text>
</comment>
<comment type="catalytic activity">
    <reaction evidence="1">
        <text>tRNA(Ile) + L-isoleucine + ATP = L-isoleucyl-tRNA(Ile) + AMP + diphosphate</text>
        <dbReference type="Rhea" id="RHEA:11060"/>
        <dbReference type="Rhea" id="RHEA-COMP:9666"/>
        <dbReference type="Rhea" id="RHEA-COMP:9695"/>
        <dbReference type="ChEBI" id="CHEBI:30616"/>
        <dbReference type="ChEBI" id="CHEBI:33019"/>
        <dbReference type="ChEBI" id="CHEBI:58045"/>
        <dbReference type="ChEBI" id="CHEBI:78442"/>
        <dbReference type="ChEBI" id="CHEBI:78528"/>
        <dbReference type="ChEBI" id="CHEBI:456215"/>
        <dbReference type="EC" id="6.1.1.5"/>
    </reaction>
</comment>
<comment type="cofactor">
    <cofactor evidence="1">
        <name>Zn(2+)</name>
        <dbReference type="ChEBI" id="CHEBI:29105"/>
    </cofactor>
    <text evidence="1">Binds 1 zinc ion per subunit.</text>
</comment>
<comment type="subunit">
    <text evidence="1">Monomer.</text>
</comment>
<comment type="subcellular location">
    <subcellularLocation>
        <location evidence="1">Cytoplasm</location>
    </subcellularLocation>
</comment>
<comment type="domain">
    <text evidence="1">IleRS has two distinct active sites: one for aminoacylation and one for editing. The misactivated valine is translocated from the active site to the editing site, which sterically excludes the correctly activated isoleucine. The single editing site contains two valyl binding pockets, one specific for each substrate (Val-AMP or Val-tRNA(Ile)).</text>
</comment>
<comment type="similarity">
    <text evidence="1">Belongs to the class-I aminoacyl-tRNA synthetase family. IleS type 1 subfamily.</text>
</comment>
<organism>
    <name type="scientific">Streptococcus thermophilus (strain ATCC BAA-250 / LMG 18311)</name>
    <dbReference type="NCBI Taxonomy" id="264199"/>
    <lineage>
        <taxon>Bacteria</taxon>
        <taxon>Bacillati</taxon>
        <taxon>Bacillota</taxon>
        <taxon>Bacilli</taxon>
        <taxon>Lactobacillales</taxon>
        <taxon>Streptococcaceae</taxon>
        <taxon>Streptococcus</taxon>
    </lineage>
</organism>
<name>SYI_STRT2</name>